<dbReference type="EMBL" id="AY358563">
    <property type="protein sequence ID" value="AAQ88926.1"/>
    <property type="molecule type" value="mRNA"/>
</dbReference>
<dbReference type="EMBL" id="AK001160">
    <property type="protein sequence ID" value="BAA91526.1"/>
    <property type="molecule type" value="mRNA"/>
</dbReference>
<dbReference type="EMBL" id="AK023622">
    <property type="protein sequence ID" value="BAB14621.1"/>
    <property type="molecule type" value="mRNA"/>
</dbReference>
<dbReference type="EMBL" id="AC007621">
    <property type="status" value="NOT_ANNOTATED_CDS"/>
    <property type="molecule type" value="Genomic_DNA"/>
</dbReference>
<dbReference type="EMBL" id="CH471094">
    <property type="protein sequence ID" value="EAW96254.1"/>
    <property type="molecule type" value="Genomic_DNA"/>
</dbReference>
<dbReference type="EMBL" id="BC032998">
    <property type="protein sequence ID" value="AAH32998.1"/>
    <property type="molecule type" value="mRNA"/>
</dbReference>
<dbReference type="CCDS" id="CCDS86284.1">
    <molecule id="Q9H8J5-2"/>
</dbReference>
<dbReference type="CCDS" id="CCDS8648.1">
    <molecule id="Q9H8J5-1"/>
</dbReference>
<dbReference type="RefSeq" id="NP_001350542.1">
    <molecule id="Q9H8J5-2"/>
    <property type="nucleotide sequence ID" value="NM_001363613.2"/>
</dbReference>
<dbReference type="RefSeq" id="NP_060520.2">
    <molecule id="Q9H8J5-1"/>
    <property type="nucleotide sequence ID" value="NM_018050.2"/>
</dbReference>
<dbReference type="RefSeq" id="XP_016875020.1">
    <property type="nucleotide sequence ID" value="XM_017019531.1"/>
</dbReference>
<dbReference type="SMR" id="Q9H8J5"/>
<dbReference type="BioGRID" id="120101">
    <property type="interactions" value="104"/>
</dbReference>
<dbReference type="FunCoup" id="Q9H8J5">
    <property type="interactions" value="323"/>
</dbReference>
<dbReference type="IntAct" id="Q9H8J5">
    <property type="interactions" value="102"/>
</dbReference>
<dbReference type="STRING" id="9606.ENSP00000438205"/>
<dbReference type="GlyCosmos" id="Q9H8J5">
    <property type="glycosylation" value="6 sites, 1 glycan"/>
</dbReference>
<dbReference type="GlyGen" id="Q9H8J5">
    <property type="glycosylation" value="19 sites, 3 O-linked glycans (12 sites)"/>
</dbReference>
<dbReference type="iPTMnet" id="Q9H8J5"/>
<dbReference type="PhosphoSitePlus" id="Q9H8J5"/>
<dbReference type="BioMuta" id="MANSC1"/>
<dbReference type="DMDM" id="48428493"/>
<dbReference type="jPOST" id="Q9H8J5"/>
<dbReference type="MassIVE" id="Q9H8J5"/>
<dbReference type="PaxDb" id="9606-ENSP00000438205"/>
<dbReference type="PeptideAtlas" id="Q9H8J5"/>
<dbReference type="ProteomicsDB" id="81214">
    <molecule id="Q9H8J5-1"/>
</dbReference>
<dbReference type="Antibodypedia" id="2339">
    <property type="antibodies" value="119 antibodies from 24 providers"/>
</dbReference>
<dbReference type="DNASU" id="54682"/>
<dbReference type="Ensembl" id="ENST00000396349.3">
    <molecule id="Q9H8J5-2"/>
    <property type="protein sequence ID" value="ENSP00000379638.3"/>
    <property type="gene ID" value="ENSG00000111261.14"/>
</dbReference>
<dbReference type="Ensembl" id="ENST00000535902.6">
    <molecule id="Q9H8J5-1"/>
    <property type="protein sequence ID" value="ENSP00000438205.1"/>
    <property type="gene ID" value="ENSG00000111261.14"/>
</dbReference>
<dbReference type="Ensembl" id="ENST00000626912.1">
    <molecule id="Q9H8J5-2"/>
    <property type="protein sequence ID" value="ENSP00000487244.1"/>
    <property type="gene ID" value="ENSG00000281818.3"/>
</dbReference>
<dbReference type="Ensembl" id="ENST00000629245.3">
    <molecule id="Q9H8J5-1"/>
    <property type="protein sequence ID" value="ENSP00000487587.1"/>
    <property type="gene ID" value="ENSG00000281818.3"/>
</dbReference>
<dbReference type="GeneID" id="54682"/>
<dbReference type="KEGG" id="hsa:54682"/>
<dbReference type="MANE-Select" id="ENST00000535902.6">
    <property type="protein sequence ID" value="ENSP00000438205.1"/>
    <property type="RefSeq nucleotide sequence ID" value="NM_018050.4"/>
    <property type="RefSeq protein sequence ID" value="NP_060520.2"/>
</dbReference>
<dbReference type="UCSC" id="uc001rai.2">
    <molecule id="Q9H8J5-1"/>
    <property type="organism name" value="human"/>
</dbReference>
<dbReference type="AGR" id="HGNC:25505"/>
<dbReference type="CTD" id="54682"/>
<dbReference type="DisGeNET" id="54682"/>
<dbReference type="GeneCards" id="MANSC1"/>
<dbReference type="HGNC" id="HGNC:25505">
    <property type="gene designation" value="MANSC1"/>
</dbReference>
<dbReference type="HPA" id="ENSG00000111261">
    <property type="expression patterns" value="Tissue enhanced (salivary)"/>
</dbReference>
<dbReference type="neXtProt" id="NX_Q9H8J5"/>
<dbReference type="OpenTargets" id="ENSG00000111261"/>
<dbReference type="PharmGKB" id="PA134948173"/>
<dbReference type="VEuPathDB" id="HostDB:ENSG00000111261"/>
<dbReference type="eggNOG" id="ENOG502RZBP">
    <property type="taxonomic scope" value="Eukaryota"/>
</dbReference>
<dbReference type="GeneTree" id="ENSGT00940000153377"/>
<dbReference type="HOGENOM" id="CLU_054219_0_0_1"/>
<dbReference type="InParanoid" id="Q9H8J5"/>
<dbReference type="OMA" id="SQNCPTK"/>
<dbReference type="OrthoDB" id="10071013at2759"/>
<dbReference type="PAN-GO" id="Q9H8J5">
    <property type="GO annotations" value="0 GO annotations based on evolutionary models"/>
</dbReference>
<dbReference type="PhylomeDB" id="Q9H8J5"/>
<dbReference type="TreeFam" id="TF336966"/>
<dbReference type="PathwayCommons" id="Q9H8J5"/>
<dbReference type="SignaLink" id="Q9H8J5"/>
<dbReference type="BioGRID-ORCS" id="54682">
    <property type="hits" value="15 hits in 1157 CRISPR screens"/>
</dbReference>
<dbReference type="ChiTaRS" id="MANSC1">
    <property type="organism name" value="human"/>
</dbReference>
<dbReference type="GenomeRNAi" id="54682"/>
<dbReference type="Pharos" id="Q9H8J5">
    <property type="development level" value="Tdark"/>
</dbReference>
<dbReference type="PRO" id="PR:Q9H8J5"/>
<dbReference type="Proteomes" id="UP000005640">
    <property type="component" value="Chromosome 12"/>
</dbReference>
<dbReference type="RNAct" id="Q9H8J5">
    <property type="molecule type" value="protein"/>
</dbReference>
<dbReference type="Bgee" id="ENSG00000111261">
    <property type="expression patterns" value="Expressed in saliva-secreting gland and 104 other cell types or tissues"/>
</dbReference>
<dbReference type="ExpressionAtlas" id="Q9H8J5">
    <property type="expression patterns" value="baseline and differential"/>
</dbReference>
<dbReference type="GO" id="GO:0005794">
    <property type="term" value="C:Golgi apparatus"/>
    <property type="evidence" value="ECO:0000318"/>
    <property type="project" value="GO_Central"/>
</dbReference>
<dbReference type="GO" id="GO:0016020">
    <property type="term" value="C:membrane"/>
    <property type="evidence" value="ECO:0007669"/>
    <property type="project" value="UniProtKB-SubCell"/>
</dbReference>
<dbReference type="InterPro" id="IPR013980">
    <property type="entry name" value="MANSC_dom"/>
</dbReference>
<dbReference type="InterPro" id="IPR011106">
    <property type="entry name" value="MANSC_N"/>
</dbReference>
<dbReference type="PANTHER" id="PTHR46876">
    <property type="entry name" value="LOW-DENSITY LIPOPROTEIN RECEPTOR-RELATED PROTEIN 11"/>
    <property type="match status" value="1"/>
</dbReference>
<dbReference type="PANTHER" id="PTHR46876:SF3">
    <property type="entry name" value="MANSC DOMAIN CONTAINING 1"/>
    <property type="match status" value="1"/>
</dbReference>
<dbReference type="Pfam" id="PF07502">
    <property type="entry name" value="MANEC"/>
    <property type="match status" value="1"/>
</dbReference>
<dbReference type="SMART" id="SM00765">
    <property type="entry name" value="MANEC"/>
    <property type="match status" value="1"/>
</dbReference>
<dbReference type="PROSITE" id="PS50986">
    <property type="entry name" value="MANSC"/>
    <property type="match status" value="1"/>
</dbReference>
<accession>Q9H8J5</accession>
<accession>Q8NEC1</accession>
<accession>Q9NW60</accession>
<feature type="signal peptide" evidence="1">
    <location>
        <begin position="1"/>
        <end position="26"/>
    </location>
</feature>
<feature type="chain" id="PRO_0000021636" description="MANSC domain-containing protein 1">
    <location>
        <begin position="27"/>
        <end position="431"/>
    </location>
</feature>
<feature type="topological domain" description="Extracellular" evidence="1">
    <location>
        <begin position="27"/>
        <end position="385"/>
    </location>
</feature>
<feature type="transmembrane region" description="Helical" evidence="1">
    <location>
        <begin position="386"/>
        <end position="408"/>
    </location>
</feature>
<feature type="topological domain" description="Cytoplasmic" evidence="1">
    <location>
        <begin position="409"/>
        <end position="431"/>
    </location>
</feature>
<feature type="domain" description="MANSC" evidence="2">
    <location>
        <begin position="33"/>
        <end position="117"/>
    </location>
</feature>
<feature type="region of interest" description="Disordered" evidence="3">
    <location>
        <begin position="234"/>
        <end position="277"/>
    </location>
</feature>
<feature type="region of interest" description="Disordered" evidence="3">
    <location>
        <begin position="352"/>
        <end position="372"/>
    </location>
</feature>
<feature type="compositionally biased region" description="Polar residues" evidence="3">
    <location>
        <begin position="248"/>
        <end position="261"/>
    </location>
</feature>
<feature type="compositionally biased region" description="Low complexity" evidence="3">
    <location>
        <begin position="262"/>
        <end position="277"/>
    </location>
</feature>
<feature type="glycosylation site" description="N-linked (GlcNAc...) asparagine" evidence="1">
    <location>
        <position position="72"/>
    </location>
</feature>
<feature type="glycosylation site" description="N-linked (GlcNAc...) asparagine" evidence="1">
    <location>
        <position position="222"/>
    </location>
</feature>
<feature type="glycosylation site" description="N-linked (GlcNAc...) asparagine" evidence="1">
    <location>
        <position position="251"/>
    </location>
</feature>
<feature type="glycosylation site" description="N-linked (GlcNAc...) asparagine" evidence="1">
    <location>
        <position position="327"/>
    </location>
</feature>
<feature type="glycosylation site" description="N-linked (GlcNAc...) asparagine" evidence="1">
    <location>
        <position position="352"/>
    </location>
</feature>
<feature type="splice variant" id="VSP_055927" description="In isoform 2." evidence="6">
    <location>
        <begin position="14"/>
        <end position="47"/>
    </location>
</feature>
<feature type="sequence variant" id="VAR_021840" description="In dbSNP:rs3741798." evidence="5">
    <original>V</original>
    <variation>I</variation>
    <location>
        <position position="55"/>
    </location>
</feature>
<feature type="sequence variant" id="VAR_061682" description="In dbSNP:rs34668262.">
    <original>L</original>
    <variation>V</variation>
    <location>
        <position position="141"/>
    </location>
</feature>
<feature type="sequence variant" id="VAR_051151" description="In dbSNP:rs17375215.">
    <original>D</original>
    <variation>N</variation>
    <location>
        <position position="165"/>
    </location>
</feature>
<feature type="sequence variant" id="VAR_021841" description="In dbSNP:rs3741803.">
    <original>N</original>
    <variation>Y</variation>
    <location>
        <position position="375"/>
    </location>
</feature>
<reference key="1">
    <citation type="journal article" date="2003" name="Genome Res.">
        <title>The secreted protein discovery initiative (SPDI), a large-scale effort to identify novel human secreted and transmembrane proteins: a bioinformatics assessment.</title>
        <authorList>
            <person name="Clark H.F."/>
            <person name="Gurney A.L."/>
            <person name="Abaya E."/>
            <person name="Baker K."/>
            <person name="Baldwin D.T."/>
            <person name="Brush J."/>
            <person name="Chen J."/>
            <person name="Chow B."/>
            <person name="Chui C."/>
            <person name="Crowley C."/>
            <person name="Currell B."/>
            <person name="Deuel B."/>
            <person name="Dowd P."/>
            <person name="Eaton D."/>
            <person name="Foster J.S."/>
            <person name="Grimaldi C."/>
            <person name="Gu Q."/>
            <person name="Hass P.E."/>
            <person name="Heldens S."/>
            <person name="Huang A."/>
            <person name="Kim H.S."/>
            <person name="Klimowski L."/>
            <person name="Jin Y."/>
            <person name="Johnson S."/>
            <person name="Lee J."/>
            <person name="Lewis L."/>
            <person name="Liao D."/>
            <person name="Mark M.R."/>
            <person name="Robbie E."/>
            <person name="Sanchez C."/>
            <person name="Schoenfeld J."/>
            <person name="Seshagiri S."/>
            <person name="Simmons L."/>
            <person name="Singh J."/>
            <person name="Smith V."/>
            <person name="Stinson J."/>
            <person name="Vagts A."/>
            <person name="Vandlen R.L."/>
            <person name="Watanabe C."/>
            <person name="Wieand D."/>
            <person name="Woods K."/>
            <person name="Xie M.-H."/>
            <person name="Yansura D.G."/>
            <person name="Yi S."/>
            <person name="Yu G."/>
            <person name="Yuan J."/>
            <person name="Zhang M."/>
            <person name="Zhang Z."/>
            <person name="Goddard A.D."/>
            <person name="Wood W.I."/>
            <person name="Godowski P.J."/>
            <person name="Gray A.M."/>
        </authorList>
    </citation>
    <scope>NUCLEOTIDE SEQUENCE [LARGE SCALE MRNA] (ISOFORM 1)</scope>
</reference>
<reference key="2">
    <citation type="journal article" date="2004" name="Nat. Genet.">
        <title>Complete sequencing and characterization of 21,243 full-length human cDNAs.</title>
        <authorList>
            <person name="Ota T."/>
            <person name="Suzuki Y."/>
            <person name="Nishikawa T."/>
            <person name="Otsuki T."/>
            <person name="Sugiyama T."/>
            <person name="Irie R."/>
            <person name="Wakamatsu A."/>
            <person name="Hayashi K."/>
            <person name="Sato H."/>
            <person name="Nagai K."/>
            <person name="Kimura K."/>
            <person name="Makita H."/>
            <person name="Sekine M."/>
            <person name="Obayashi M."/>
            <person name="Nishi T."/>
            <person name="Shibahara T."/>
            <person name="Tanaka T."/>
            <person name="Ishii S."/>
            <person name="Yamamoto J."/>
            <person name="Saito K."/>
            <person name="Kawai Y."/>
            <person name="Isono Y."/>
            <person name="Nakamura Y."/>
            <person name="Nagahari K."/>
            <person name="Murakami K."/>
            <person name="Yasuda T."/>
            <person name="Iwayanagi T."/>
            <person name="Wagatsuma M."/>
            <person name="Shiratori A."/>
            <person name="Sudo H."/>
            <person name="Hosoiri T."/>
            <person name="Kaku Y."/>
            <person name="Kodaira H."/>
            <person name="Kondo H."/>
            <person name="Sugawara M."/>
            <person name="Takahashi M."/>
            <person name="Kanda K."/>
            <person name="Yokoi T."/>
            <person name="Furuya T."/>
            <person name="Kikkawa E."/>
            <person name="Omura Y."/>
            <person name="Abe K."/>
            <person name="Kamihara K."/>
            <person name="Katsuta N."/>
            <person name="Sato K."/>
            <person name="Tanikawa M."/>
            <person name="Yamazaki M."/>
            <person name="Ninomiya K."/>
            <person name="Ishibashi T."/>
            <person name="Yamashita H."/>
            <person name="Murakawa K."/>
            <person name="Fujimori K."/>
            <person name="Tanai H."/>
            <person name="Kimata M."/>
            <person name="Watanabe M."/>
            <person name="Hiraoka S."/>
            <person name="Chiba Y."/>
            <person name="Ishida S."/>
            <person name="Ono Y."/>
            <person name="Takiguchi S."/>
            <person name="Watanabe S."/>
            <person name="Yosida M."/>
            <person name="Hotuta T."/>
            <person name="Kusano J."/>
            <person name="Kanehori K."/>
            <person name="Takahashi-Fujii A."/>
            <person name="Hara H."/>
            <person name="Tanase T.-O."/>
            <person name="Nomura Y."/>
            <person name="Togiya S."/>
            <person name="Komai F."/>
            <person name="Hara R."/>
            <person name="Takeuchi K."/>
            <person name="Arita M."/>
            <person name="Imose N."/>
            <person name="Musashino K."/>
            <person name="Yuuki H."/>
            <person name="Oshima A."/>
            <person name="Sasaki N."/>
            <person name="Aotsuka S."/>
            <person name="Yoshikawa Y."/>
            <person name="Matsunawa H."/>
            <person name="Ichihara T."/>
            <person name="Shiohata N."/>
            <person name="Sano S."/>
            <person name="Moriya S."/>
            <person name="Momiyama H."/>
            <person name="Satoh N."/>
            <person name="Takami S."/>
            <person name="Terashima Y."/>
            <person name="Suzuki O."/>
            <person name="Nakagawa S."/>
            <person name="Senoh A."/>
            <person name="Mizoguchi H."/>
            <person name="Goto Y."/>
            <person name="Shimizu F."/>
            <person name="Wakebe H."/>
            <person name="Hishigaki H."/>
            <person name="Watanabe T."/>
            <person name="Sugiyama A."/>
            <person name="Takemoto M."/>
            <person name="Kawakami B."/>
            <person name="Yamazaki M."/>
            <person name="Watanabe K."/>
            <person name="Kumagai A."/>
            <person name="Itakura S."/>
            <person name="Fukuzumi Y."/>
            <person name="Fujimori Y."/>
            <person name="Komiyama M."/>
            <person name="Tashiro H."/>
            <person name="Tanigami A."/>
            <person name="Fujiwara T."/>
            <person name="Ono T."/>
            <person name="Yamada K."/>
            <person name="Fujii Y."/>
            <person name="Ozaki K."/>
            <person name="Hirao M."/>
            <person name="Ohmori Y."/>
            <person name="Kawabata A."/>
            <person name="Hikiji T."/>
            <person name="Kobatake N."/>
            <person name="Inagaki H."/>
            <person name="Ikema Y."/>
            <person name="Okamoto S."/>
            <person name="Okitani R."/>
            <person name="Kawakami T."/>
            <person name="Noguchi S."/>
            <person name="Itoh T."/>
            <person name="Shigeta K."/>
            <person name="Senba T."/>
            <person name="Matsumura K."/>
            <person name="Nakajima Y."/>
            <person name="Mizuno T."/>
            <person name="Morinaga M."/>
            <person name="Sasaki M."/>
            <person name="Togashi T."/>
            <person name="Oyama M."/>
            <person name="Hata H."/>
            <person name="Watanabe M."/>
            <person name="Komatsu T."/>
            <person name="Mizushima-Sugano J."/>
            <person name="Satoh T."/>
            <person name="Shirai Y."/>
            <person name="Takahashi Y."/>
            <person name="Nakagawa K."/>
            <person name="Okumura K."/>
            <person name="Nagase T."/>
            <person name="Nomura N."/>
            <person name="Kikuchi H."/>
            <person name="Masuho Y."/>
            <person name="Yamashita R."/>
            <person name="Nakai K."/>
            <person name="Yada T."/>
            <person name="Nakamura Y."/>
            <person name="Ohara O."/>
            <person name="Isogai T."/>
            <person name="Sugano S."/>
        </authorList>
    </citation>
    <scope>NUCLEOTIDE SEQUENCE [LARGE SCALE MRNA] (ISOFORMS 1 AND 2)</scope>
    <source>
        <tissue>Placenta</tissue>
    </source>
</reference>
<reference key="3">
    <citation type="journal article" date="2006" name="Nature">
        <title>The finished DNA sequence of human chromosome 12.</title>
        <authorList>
            <person name="Scherer S.E."/>
            <person name="Muzny D.M."/>
            <person name="Buhay C.J."/>
            <person name="Chen R."/>
            <person name="Cree A."/>
            <person name="Ding Y."/>
            <person name="Dugan-Rocha S."/>
            <person name="Gill R."/>
            <person name="Gunaratne P."/>
            <person name="Harris R.A."/>
            <person name="Hawes A.C."/>
            <person name="Hernandez J."/>
            <person name="Hodgson A.V."/>
            <person name="Hume J."/>
            <person name="Jackson A."/>
            <person name="Khan Z.M."/>
            <person name="Kovar-Smith C."/>
            <person name="Lewis L.R."/>
            <person name="Lozado R.J."/>
            <person name="Metzker M.L."/>
            <person name="Milosavljevic A."/>
            <person name="Miner G.R."/>
            <person name="Montgomery K.T."/>
            <person name="Morgan M.B."/>
            <person name="Nazareth L.V."/>
            <person name="Scott G."/>
            <person name="Sodergren E."/>
            <person name="Song X.-Z."/>
            <person name="Steffen D."/>
            <person name="Lovering R.C."/>
            <person name="Wheeler D.A."/>
            <person name="Worley K.C."/>
            <person name="Yuan Y."/>
            <person name="Zhang Z."/>
            <person name="Adams C.Q."/>
            <person name="Ansari-Lari M.A."/>
            <person name="Ayele M."/>
            <person name="Brown M.J."/>
            <person name="Chen G."/>
            <person name="Chen Z."/>
            <person name="Clerc-Blankenburg K.P."/>
            <person name="Davis C."/>
            <person name="Delgado O."/>
            <person name="Dinh H.H."/>
            <person name="Draper H."/>
            <person name="Gonzalez-Garay M.L."/>
            <person name="Havlak P."/>
            <person name="Jackson L.R."/>
            <person name="Jacob L.S."/>
            <person name="Kelly S.H."/>
            <person name="Li L."/>
            <person name="Li Z."/>
            <person name="Liu J."/>
            <person name="Liu W."/>
            <person name="Lu J."/>
            <person name="Maheshwari M."/>
            <person name="Nguyen B.-V."/>
            <person name="Okwuonu G.O."/>
            <person name="Pasternak S."/>
            <person name="Perez L.M."/>
            <person name="Plopper F.J.H."/>
            <person name="Santibanez J."/>
            <person name="Shen H."/>
            <person name="Tabor P.E."/>
            <person name="Verduzco D."/>
            <person name="Waldron L."/>
            <person name="Wang Q."/>
            <person name="Williams G.A."/>
            <person name="Zhang J."/>
            <person name="Zhou J."/>
            <person name="Allen C.C."/>
            <person name="Amin A.G."/>
            <person name="Anyalebechi V."/>
            <person name="Bailey M."/>
            <person name="Barbaria J.A."/>
            <person name="Bimage K.E."/>
            <person name="Bryant N.P."/>
            <person name="Burch P.E."/>
            <person name="Burkett C.E."/>
            <person name="Burrell K.L."/>
            <person name="Calderon E."/>
            <person name="Cardenas V."/>
            <person name="Carter K."/>
            <person name="Casias K."/>
            <person name="Cavazos I."/>
            <person name="Cavazos S.R."/>
            <person name="Ceasar H."/>
            <person name="Chacko J."/>
            <person name="Chan S.N."/>
            <person name="Chavez D."/>
            <person name="Christopoulos C."/>
            <person name="Chu J."/>
            <person name="Cockrell R."/>
            <person name="Cox C.D."/>
            <person name="Dang M."/>
            <person name="Dathorne S.R."/>
            <person name="David R."/>
            <person name="Davis C.M."/>
            <person name="Davy-Carroll L."/>
            <person name="Deshazo D.R."/>
            <person name="Donlin J.E."/>
            <person name="D'Souza L."/>
            <person name="Eaves K.A."/>
            <person name="Egan A."/>
            <person name="Emery-Cohen A.J."/>
            <person name="Escotto M."/>
            <person name="Flagg N."/>
            <person name="Forbes L.D."/>
            <person name="Gabisi A.M."/>
            <person name="Garza M."/>
            <person name="Hamilton C."/>
            <person name="Henderson N."/>
            <person name="Hernandez O."/>
            <person name="Hines S."/>
            <person name="Hogues M.E."/>
            <person name="Huang M."/>
            <person name="Idlebird D.G."/>
            <person name="Johnson R."/>
            <person name="Jolivet A."/>
            <person name="Jones S."/>
            <person name="Kagan R."/>
            <person name="King L.M."/>
            <person name="Leal B."/>
            <person name="Lebow H."/>
            <person name="Lee S."/>
            <person name="LeVan J.M."/>
            <person name="Lewis L.C."/>
            <person name="London P."/>
            <person name="Lorensuhewa L.M."/>
            <person name="Loulseged H."/>
            <person name="Lovett D.A."/>
            <person name="Lucier A."/>
            <person name="Lucier R.L."/>
            <person name="Ma J."/>
            <person name="Madu R.C."/>
            <person name="Mapua P."/>
            <person name="Martindale A.D."/>
            <person name="Martinez E."/>
            <person name="Massey E."/>
            <person name="Mawhiney S."/>
            <person name="Meador M.G."/>
            <person name="Mendez S."/>
            <person name="Mercado C."/>
            <person name="Mercado I.C."/>
            <person name="Merritt C.E."/>
            <person name="Miner Z.L."/>
            <person name="Minja E."/>
            <person name="Mitchell T."/>
            <person name="Mohabbat F."/>
            <person name="Mohabbat K."/>
            <person name="Montgomery B."/>
            <person name="Moore N."/>
            <person name="Morris S."/>
            <person name="Munidasa M."/>
            <person name="Ngo R.N."/>
            <person name="Nguyen N.B."/>
            <person name="Nickerson E."/>
            <person name="Nwaokelemeh O.O."/>
            <person name="Nwokenkwo S."/>
            <person name="Obregon M."/>
            <person name="Oguh M."/>
            <person name="Oragunye N."/>
            <person name="Oviedo R.J."/>
            <person name="Parish B.J."/>
            <person name="Parker D.N."/>
            <person name="Parrish J."/>
            <person name="Parks K.L."/>
            <person name="Paul H.A."/>
            <person name="Payton B.A."/>
            <person name="Perez A."/>
            <person name="Perrin W."/>
            <person name="Pickens A."/>
            <person name="Primus E.L."/>
            <person name="Pu L.-L."/>
            <person name="Puazo M."/>
            <person name="Quiles M.M."/>
            <person name="Quiroz J.B."/>
            <person name="Rabata D."/>
            <person name="Reeves K."/>
            <person name="Ruiz S.J."/>
            <person name="Shao H."/>
            <person name="Sisson I."/>
            <person name="Sonaike T."/>
            <person name="Sorelle R.P."/>
            <person name="Sutton A.E."/>
            <person name="Svatek A.F."/>
            <person name="Svetz L.A."/>
            <person name="Tamerisa K.S."/>
            <person name="Taylor T.R."/>
            <person name="Teague B."/>
            <person name="Thomas N."/>
            <person name="Thorn R.D."/>
            <person name="Trejos Z.Y."/>
            <person name="Trevino B.K."/>
            <person name="Ukegbu O.N."/>
            <person name="Urban J.B."/>
            <person name="Vasquez L.I."/>
            <person name="Vera V.A."/>
            <person name="Villasana D.M."/>
            <person name="Wang L."/>
            <person name="Ward-Moore S."/>
            <person name="Warren J.T."/>
            <person name="Wei X."/>
            <person name="White F."/>
            <person name="Williamson A.L."/>
            <person name="Wleczyk R."/>
            <person name="Wooden H.S."/>
            <person name="Wooden S.H."/>
            <person name="Yen J."/>
            <person name="Yoon L."/>
            <person name="Yoon V."/>
            <person name="Zorrilla S.E."/>
            <person name="Nelson D."/>
            <person name="Kucherlapati R."/>
            <person name="Weinstock G."/>
            <person name="Gibbs R.A."/>
        </authorList>
    </citation>
    <scope>NUCLEOTIDE SEQUENCE [LARGE SCALE GENOMIC DNA]</scope>
</reference>
<reference key="4">
    <citation type="submission" date="2005-07" db="EMBL/GenBank/DDBJ databases">
        <authorList>
            <person name="Mural R.J."/>
            <person name="Istrail S."/>
            <person name="Sutton G."/>
            <person name="Florea L."/>
            <person name="Halpern A.L."/>
            <person name="Mobarry C.M."/>
            <person name="Lippert R."/>
            <person name="Walenz B."/>
            <person name="Shatkay H."/>
            <person name="Dew I."/>
            <person name="Miller J.R."/>
            <person name="Flanigan M.J."/>
            <person name="Edwards N.J."/>
            <person name="Bolanos R."/>
            <person name="Fasulo D."/>
            <person name="Halldorsson B.V."/>
            <person name="Hannenhalli S."/>
            <person name="Turner R."/>
            <person name="Yooseph S."/>
            <person name="Lu F."/>
            <person name="Nusskern D.R."/>
            <person name="Shue B.C."/>
            <person name="Zheng X.H."/>
            <person name="Zhong F."/>
            <person name="Delcher A.L."/>
            <person name="Huson D.H."/>
            <person name="Kravitz S.A."/>
            <person name="Mouchard L."/>
            <person name="Reinert K."/>
            <person name="Remington K.A."/>
            <person name="Clark A.G."/>
            <person name="Waterman M.S."/>
            <person name="Eichler E.E."/>
            <person name="Adams M.D."/>
            <person name="Hunkapiller M.W."/>
            <person name="Myers E.W."/>
            <person name="Venter J.C."/>
        </authorList>
    </citation>
    <scope>NUCLEOTIDE SEQUENCE [LARGE SCALE GENOMIC DNA]</scope>
</reference>
<reference key="5">
    <citation type="journal article" date="2004" name="Genome Res.">
        <title>The status, quality, and expansion of the NIH full-length cDNA project: the Mammalian Gene Collection (MGC).</title>
        <authorList>
            <consortium name="The MGC Project Team"/>
        </authorList>
    </citation>
    <scope>NUCLEOTIDE SEQUENCE [LARGE SCALE MRNA] (ISOFORM 1)</scope>
    <scope>VARIANT ILE-55</scope>
    <source>
        <tissue>Testis</tissue>
    </source>
</reference>
<reference key="6">
    <citation type="journal article" date="2002" name="Eur. J. Hum. Genet.">
        <title>A detailed transcriptional map of the chromosome 12p12 tumour suppressor locus.</title>
        <authorList>
            <person name="Montpetit A."/>
            <person name="Boily G."/>
            <person name="Sinnett D."/>
        </authorList>
    </citation>
    <scope>TISSUE SPECIFICITY</scope>
</reference>
<name>MANS1_HUMAN</name>
<sequence length="431" mass="46810">MFFGGEGSLTYTLVIICFLTLRLSASQNCLKKSLEDVVIDIQSSLSKGIRGNEPVYTSTQEDCINSCCSTKNISGDKACNLMIFDTRKTARQPNCYLFFCPNEEACPLKPAKGLMSYRIITDFPSLTRNLPSQELPQEDSLLHGQFSQAVTPLAHHHTDYSKPTDISWRDTLSQKFGSSDHLEKLFKMDEASAQLLAYKEKGHSQSSQFSSDQEIAHLLPENVSALPATVAVASPHTTSATPKPATLLPTNASVTPSGTSQPQLATTAPPVTTVTSQPPTTLISTVFTRAAATLQAMATTAVLTTTFQAPTDSKGSLETIPFTEISNLTLNTGNVYNPTALSMSNVESSTMNKTASWEGREASPGSSSQGSVPENQYGLPFEKWLLIGSLLFGVLFLVIGLVLLGRILSESLRRKRYSRLDYLINGIYVDI</sequence>
<evidence type="ECO:0000255" key="1"/>
<evidence type="ECO:0000255" key="2">
    <source>
        <dbReference type="PROSITE-ProRule" id="PRU00341"/>
    </source>
</evidence>
<evidence type="ECO:0000256" key="3">
    <source>
        <dbReference type="SAM" id="MobiDB-lite"/>
    </source>
</evidence>
<evidence type="ECO:0000269" key="4">
    <source>
    </source>
</evidence>
<evidence type="ECO:0000269" key="5">
    <source>
    </source>
</evidence>
<evidence type="ECO:0000303" key="6">
    <source>
    </source>
</evidence>
<evidence type="ECO:0000305" key="7"/>
<gene>
    <name type="primary">MANSC1</name>
    <name type="synonym">LOH12CR3</name>
    <name type="ORF">UNQ316/PRO361</name>
</gene>
<protein>
    <recommendedName>
        <fullName>MANSC domain-containing protein 1</fullName>
    </recommendedName>
    <alternativeName>
        <fullName>Loss of heterozygosity 12 chromosomal region 3 protein</fullName>
    </alternativeName>
</protein>
<keyword id="KW-0025">Alternative splicing</keyword>
<keyword id="KW-0325">Glycoprotein</keyword>
<keyword id="KW-0472">Membrane</keyword>
<keyword id="KW-1267">Proteomics identification</keyword>
<keyword id="KW-1185">Reference proteome</keyword>
<keyword id="KW-0732">Signal</keyword>
<keyword id="KW-0812">Transmembrane</keyword>
<keyword id="KW-1133">Transmembrane helix</keyword>
<organism>
    <name type="scientific">Homo sapiens</name>
    <name type="common">Human</name>
    <dbReference type="NCBI Taxonomy" id="9606"/>
    <lineage>
        <taxon>Eukaryota</taxon>
        <taxon>Metazoa</taxon>
        <taxon>Chordata</taxon>
        <taxon>Craniata</taxon>
        <taxon>Vertebrata</taxon>
        <taxon>Euteleostomi</taxon>
        <taxon>Mammalia</taxon>
        <taxon>Eutheria</taxon>
        <taxon>Euarchontoglires</taxon>
        <taxon>Primates</taxon>
        <taxon>Haplorrhini</taxon>
        <taxon>Catarrhini</taxon>
        <taxon>Hominidae</taxon>
        <taxon>Homo</taxon>
    </lineage>
</organism>
<proteinExistence type="evidence at protein level"/>
<comment type="interaction">
    <interactant intactId="EBI-2830042">
        <id>Q9H8J5</id>
    </interactant>
    <interactant intactId="EBI-12190699">
        <id>Q6UX27-3</id>
        <label>VSTM1</label>
    </interactant>
    <organismsDiffer>false</organismsDiffer>
    <experiments>3</experiments>
</comment>
<comment type="subcellular location">
    <subcellularLocation>
        <location evidence="7">Membrane</location>
        <topology evidence="7">Single-pass type I membrane protein</topology>
    </subcellularLocation>
</comment>
<comment type="alternative products">
    <event type="alternative splicing"/>
    <isoform>
        <id>Q9H8J5-1</id>
        <name>1</name>
        <sequence type="displayed"/>
    </isoform>
    <isoform>
        <id>Q9H8J5-2</id>
        <name>2</name>
        <sequence type="described" ref="VSP_055927"/>
    </isoform>
</comment>
<comment type="tissue specificity">
    <text evidence="4">Widely expressed.</text>
</comment>